<comment type="function">
    <text evidence="7 8 9 10">V region of the variable domain of immunoglobulin light chains that participates in the antigen recognition (PubMed:24600447). Immunoglobulins, also known as antibodies, are membrane-bound or secreted glycoproteins produced by B lymphocytes. In the recognition phase of humoral immunity, the membrane-bound immunoglobulins serve as receptors which, upon binding of a specific antigen, trigger the clonal expansion and differentiation of B lymphocytes into immunoglobulins-secreting plasma cells. Secreted immunoglobulins mediate the effector phase of humoral immunity, which results in the elimination of bound antigens (PubMed:20176268, PubMed:22158414). The antigen binding site is formed by the variable domain of one heavy chain, together with that of its associated light chain. Thus, each immunoglobulin has two antigen binding sites with remarkable affinity for a particular antigen. The variable domains are assembled by a process called V-(D)-J rearrangement and can then be subjected to somatic hypermutations which, after exposure to antigen and selection, allow affinity maturation for a particular antigen (PubMed:17576170, PubMed:20176268).</text>
</comment>
<comment type="subunit">
    <text evidence="8">Immunoglobulins are composed of two identical heavy chains and two identical light chains; disulfide-linked.</text>
</comment>
<comment type="subcellular location">
    <subcellularLocation>
        <location evidence="8 9">Secreted</location>
    </subcellularLocation>
    <subcellularLocation>
        <location evidence="8 9">Cell membrane</location>
    </subcellularLocation>
</comment>
<comment type="polymorphism">
    <text>There are several alleles. The sequence shown is that of IMGT allele IGLV2-8*01.</text>
</comment>
<comment type="caution">
    <text evidence="12">For an example of a full-length immunoglobulin lambda light chain see AC P0DOX8.</text>
</comment>
<evidence type="ECO:0000250" key="1">
    <source>
        <dbReference type="UniProtKB" id="P01721"/>
    </source>
</evidence>
<evidence type="ECO:0000255" key="2">
    <source>
        <dbReference type="PROSITE-ProRule" id="PRU00114"/>
    </source>
</evidence>
<evidence type="ECO:0000256" key="3">
    <source>
        <dbReference type="SAM" id="MobiDB-lite"/>
    </source>
</evidence>
<evidence type="ECO:0000269" key="4">
    <source>
    </source>
</evidence>
<evidence type="ECO:0000269" key="5">
    <source>
    </source>
</evidence>
<evidence type="ECO:0000303" key="6">
    <source>
    </source>
</evidence>
<evidence type="ECO:0000303" key="7">
    <source>
    </source>
</evidence>
<evidence type="ECO:0000303" key="8">
    <source>
    </source>
</evidence>
<evidence type="ECO:0000303" key="9">
    <source>
    </source>
</evidence>
<evidence type="ECO:0000303" key="10">
    <source>
    </source>
</evidence>
<evidence type="ECO:0000303" key="11">
    <source ref="5"/>
</evidence>
<evidence type="ECO:0000305" key="12"/>
<evidence type="ECO:0000305" key="13">
    <source>
    </source>
</evidence>
<evidence type="ECO:0000305" key="14">
    <source>
    </source>
</evidence>
<evidence type="ECO:0007829" key="15">
    <source>
        <dbReference type="PDB" id="1A8J"/>
    </source>
</evidence>
<evidence type="ECO:0007829" key="16">
    <source>
        <dbReference type="PDB" id="2MCG"/>
    </source>
</evidence>
<evidence type="ECO:0007829" key="17">
    <source>
        <dbReference type="PDB" id="4UNU"/>
    </source>
</evidence>
<sequence length="118" mass="12382">MAWALLLLTLLTQGTGSWAQSALTQPPSASGSPGQSVTISCTGTSSDVGGYNYVSWYQQHPGKAPKLMIYEVSKRPSGVPDRFSGSKSGNTASLTVSGLQAEDEADYYCSSYAGSNNF</sequence>
<accession>P01709</accession>
<accession>A0A087WZW9</accession>
<accession>P01710</accession>
<keyword id="KW-0002">3D-structure</keyword>
<keyword id="KW-1064">Adaptive immunity</keyword>
<keyword id="KW-1003">Cell membrane</keyword>
<keyword id="KW-0903">Direct protein sequencing</keyword>
<keyword id="KW-1015">Disulfide bond</keyword>
<keyword id="KW-0391">Immunity</keyword>
<keyword id="KW-1280">Immunoglobulin</keyword>
<keyword id="KW-0393">Immunoglobulin domain</keyword>
<keyword id="KW-0472">Membrane</keyword>
<keyword id="KW-1267">Proteomics identification</keyword>
<keyword id="KW-0873">Pyrrolidone carboxylic acid</keyword>
<keyword id="KW-1185">Reference proteome</keyword>
<keyword id="KW-0964">Secreted</keyword>
<keyword id="KW-0732">Signal</keyword>
<proteinExistence type="evidence at protein level"/>
<reference key="1">
    <citation type="journal article" date="1999" name="Nature">
        <title>The DNA sequence of human chromosome 22.</title>
        <authorList>
            <person name="Dunham I."/>
            <person name="Hunt A.R."/>
            <person name="Collins J.E."/>
            <person name="Bruskiewich R."/>
            <person name="Beare D.M."/>
            <person name="Clamp M."/>
            <person name="Smink L.J."/>
            <person name="Ainscough R."/>
            <person name="Almeida J.P."/>
            <person name="Babbage A.K."/>
            <person name="Bagguley C."/>
            <person name="Bailey J."/>
            <person name="Barlow K.F."/>
            <person name="Bates K.N."/>
            <person name="Beasley O.P."/>
            <person name="Bird C.P."/>
            <person name="Blakey S.E."/>
            <person name="Bridgeman A.M."/>
            <person name="Buck D."/>
            <person name="Burgess J."/>
            <person name="Burrill W.D."/>
            <person name="Burton J."/>
            <person name="Carder C."/>
            <person name="Carter N.P."/>
            <person name="Chen Y."/>
            <person name="Clark G."/>
            <person name="Clegg S.M."/>
            <person name="Cobley V.E."/>
            <person name="Cole C.G."/>
            <person name="Collier R.E."/>
            <person name="Connor R."/>
            <person name="Conroy D."/>
            <person name="Corby N.R."/>
            <person name="Coville G.J."/>
            <person name="Cox A.V."/>
            <person name="Davis J."/>
            <person name="Dawson E."/>
            <person name="Dhami P.D."/>
            <person name="Dockree C."/>
            <person name="Dodsworth S.J."/>
            <person name="Durbin R.M."/>
            <person name="Ellington A.G."/>
            <person name="Evans K.L."/>
            <person name="Fey J.M."/>
            <person name="Fleming K."/>
            <person name="French L."/>
            <person name="Garner A.A."/>
            <person name="Gilbert J.G.R."/>
            <person name="Goward M.E."/>
            <person name="Grafham D.V."/>
            <person name="Griffiths M.N.D."/>
            <person name="Hall C."/>
            <person name="Hall R.E."/>
            <person name="Hall-Tamlyn G."/>
            <person name="Heathcott R.W."/>
            <person name="Ho S."/>
            <person name="Holmes S."/>
            <person name="Hunt S.E."/>
            <person name="Jones M.C."/>
            <person name="Kershaw J."/>
            <person name="Kimberley A.M."/>
            <person name="King A."/>
            <person name="Laird G.K."/>
            <person name="Langford C.F."/>
            <person name="Leversha M.A."/>
            <person name="Lloyd C."/>
            <person name="Lloyd D.M."/>
            <person name="Martyn I.D."/>
            <person name="Mashreghi-Mohammadi M."/>
            <person name="Matthews L.H."/>
            <person name="Mccann O.T."/>
            <person name="Mcclay J."/>
            <person name="Mclaren S."/>
            <person name="McMurray A.A."/>
            <person name="Milne S.A."/>
            <person name="Mortimore B.J."/>
            <person name="Odell C.N."/>
            <person name="Pavitt R."/>
            <person name="Pearce A.V."/>
            <person name="Pearson D."/>
            <person name="Phillimore B.J.C.T."/>
            <person name="Phillips S.H."/>
            <person name="Plumb R.W."/>
            <person name="Ramsay H."/>
            <person name="Ramsey Y."/>
            <person name="Rogers L."/>
            <person name="Ross M.T."/>
            <person name="Scott C.E."/>
            <person name="Sehra H.K."/>
            <person name="Skuce C.D."/>
            <person name="Smalley S."/>
            <person name="Smith M.L."/>
            <person name="Soderlund C."/>
            <person name="Spragon L."/>
            <person name="Steward C.A."/>
            <person name="Sulston J.E."/>
            <person name="Swann R.M."/>
            <person name="Vaudin M."/>
            <person name="Wall M."/>
            <person name="Wallis J.M."/>
            <person name="Whiteley M.N."/>
            <person name="Willey D.L."/>
            <person name="Williams L."/>
            <person name="Williams S.A."/>
            <person name="Williamson H."/>
            <person name="Wilmer T.E."/>
            <person name="Wilming L."/>
            <person name="Wright C.L."/>
            <person name="Hubbard T."/>
            <person name="Bentley D.R."/>
            <person name="Beck S."/>
            <person name="Rogers J."/>
            <person name="Shimizu N."/>
            <person name="Minoshima S."/>
            <person name="Kawasaki K."/>
            <person name="Sasaki T."/>
            <person name="Asakawa S."/>
            <person name="Kudoh J."/>
            <person name="Shintani A."/>
            <person name="Shibuya K."/>
            <person name="Yoshizaki Y."/>
            <person name="Aoki N."/>
            <person name="Mitsuyama S."/>
            <person name="Roe B.A."/>
            <person name="Chen F."/>
            <person name="Chu L."/>
            <person name="Crabtree J."/>
            <person name="Deschamps S."/>
            <person name="Do A."/>
            <person name="Do T."/>
            <person name="Dorman A."/>
            <person name="Fang F."/>
            <person name="Fu Y."/>
            <person name="Hu P."/>
            <person name="Hua A."/>
            <person name="Kenton S."/>
            <person name="Lai H."/>
            <person name="Lao H.I."/>
            <person name="Lewis J."/>
            <person name="Lewis S."/>
            <person name="Lin S.-P."/>
            <person name="Loh P."/>
            <person name="Malaj E."/>
            <person name="Nguyen T."/>
            <person name="Pan H."/>
            <person name="Phan S."/>
            <person name="Qi S."/>
            <person name="Qian Y."/>
            <person name="Ray L."/>
            <person name="Ren Q."/>
            <person name="Shaull S."/>
            <person name="Sloan D."/>
            <person name="Song L."/>
            <person name="Wang Q."/>
            <person name="Wang Y."/>
            <person name="Wang Z."/>
            <person name="White J."/>
            <person name="Willingham D."/>
            <person name="Wu H."/>
            <person name="Yao Z."/>
            <person name="Zhan M."/>
            <person name="Zhang G."/>
            <person name="Chissoe S."/>
            <person name="Murray J."/>
            <person name="Miller N."/>
            <person name="Minx P."/>
            <person name="Fulton R."/>
            <person name="Johnson D."/>
            <person name="Bemis G."/>
            <person name="Bentley D."/>
            <person name="Bradshaw H."/>
            <person name="Bourne S."/>
            <person name="Cordes M."/>
            <person name="Du Z."/>
            <person name="Fulton L."/>
            <person name="Goela D."/>
            <person name="Graves T."/>
            <person name="Hawkins J."/>
            <person name="Hinds K."/>
            <person name="Kemp K."/>
            <person name="Latreille P."/>
            <person name="Layman D."/>
            <person name="Ozersky P."/>
            <person name="Rohlfing T."/>
            <person name="Scheet P."/>
            <person name="Walker C."/>
            <person name="Wamsley A."/>
            <person name="Wohldmann P."/>
            <person name="Pepin K."/>
            <person name="Nelson J."/>
            <person name="Korf I."/>
            <person name="Bedell J.A."/>
            <person name="Hillier L.W."/>
            <person name="Mardis E."/>
            <person name="Waterston R."/>
            <person name="Wilson R."/>
            <person name="Emanuel B.S."/>
            <person name="Shaikh T."/>
            <person name="Kurahashi H."/>
            <person name="Saitta S."/>
            <person name="Budarf M.L."/>
            <person name="McDermid H.E."/>
            <person name="Johnson A."/>
            <person name="Wong A.C.C."/>
            <person name="Morrow B.E."/>
            <person name="Edelmann L."/>
            <person name="Kim U.J."/>
            <person name="Shizuya H."/>
            <person name="Simon M.I."/>
            <person name="Dumanski J.P."/>
            <person name="Peyrard M."/>
            <person name="Kedra D."/>
            <person name="Seroussi E."/>
            <person name="Fransson I."/>
            <person name="Tapia I."/>
            <person name="Bruder C.E."/>
            <person name="O'Brien K.P."/>
            <person name="Wilkinson P."/>
            <person name="Bodenteich A."/>
            <person name="Hartman K."/>
            <person name="Hu X."/>
            <person name="Khan A.S."/>
            <person name="Lane L."/>
            <person name="Tilahun Y."/>
            <person name="Wright H."/>
        </authorList>
    </citation>
    <scope>NUCLEOTIDE SEQUENCE [LARGE SCALE GENOMIC DNA] (IMGT ALLELE IGLV2-8*01)</scope>
</reference>
<reference key="2">
    <citation type="journal article" date="1970" name="J. Biol. Chem.">
        <title>Amino acid sequence of human lambda chains. 3. Tryptic peptides, chymotryptic peptides, and sequence of protein Bo.</title>
        <authorList>
            <person name="Wikler M."/>
            <person name="Putnam F.W."/>
        </authorList>
    </citation>
    <scope>PROTEIN SEQUENCE OF 20-118</scope>
    <scope>PYROGLUTAMATE FORMATION AT GLN-20</scope>
</reference>
<reference key="3">
    <citation type="journal article" date="1974" name="Biochemistry">
        <title>Primary structure of the Mcg lambda chain.</title>
        <authorList>
            <person name="Fett J.W."/>
            <person name="Deutsch H.F."/>
        </authorList>
    </citation>
    <scope>PROTEIN SEQUENCE OF 20-118</scope>
    <scope>PYROGLUTAMATE FORMATION AT GLN-20</scope>
</reference>
<reference key="4">
    <citation type="journal article" date="2001" name="Exp. Clin. Immunogenet.">
        <title>Nomenclature of the human immunoglobulin lambda (IGL) genes.</title>
        <authorList>
            <person name="Lefranc M.P."/>
        </authorList>
    </citation>
    <scope>NOMENCLATURE</scope>
</reference>
<reference key="5">
    <citation type="book" date="2001" name="The Immunoglobulin FactsBook.">
        <title>The Immunoglobulin FactsBook.</title>
        <editorList>
            <person name="Lefranc M.P."/>
            <person name="Lefranc G."/>
        </editorList>
        <authorList>
            <person name="Lefranc M.P."/>
            <person name="Lefranc G."/>
        </authorList>
    </citation>
    <scope>NOMENCLATURE</scope>
</reference>
<reference key="6">
    <citation type="journal article" date="2007" name="Annu. Rev. Genet.">
        <title>Immunoglobulin somatic hypermutation.</title>
        <authorList>
            <person name="Teng G."/>
            <person name="Papavasiliou F.N."/>
        </authorList>
    </citation>
    <scope>REVIEW ON SOMATIC HYPERMUTATION</scope>
</reference>
<reference key="7">
    <citation type="journal article" date="2010" name="J. Allergy Clin. Immunol.">
        <title>Structure and function of immunoglobulins.</title>
        <authorList>
            <person name="Schroeder H.W. Jr."/>
            <person name="Cavacini L."/>
        </authorList>
    </citation>
    <scope>REVIEW ON IMMUNOGLOBULINS</scope>
</reference>
<reference key="8">
    <citation type="journal article" date="2012" name="Nat. Rev. Immunol.">
        <title>Molecular programming of B cell memory.</title>
        <authorList>
            <person name="McHeyzer-Williams M."/>
            <person name="Okitsu S."/>
            <person name="Wang N."/>
            <person name="McHeyzer-Williams L."/>
        </authorList>
    </citation>
    <scope>REVIEW ON FUNCTION</scope>
</reference>
<reference key="9">
    <citation type="journal article" date="2014" name="Front. Immunol.">
        <title>Immunoglobulin and T Cell Receptor Genes: IMGT((R)) and the Birth and Rise of Immunoinformatics.</title>
        <authorList>
            <person name="Lefranc M.P."/>
        </authorList>
    </citation>
    <scope>NOMENCLATURE</scope>
</reference>
<reference key="10">
    <citation type="journal article" date="1989" name="J. Mol. Biol.">
        <title>Three-dimensional structure of a light chain dimer crystallized in water. Conformational flexibility of a molecule in two crystal forms.</title>
        <authorList>
            <person name="Ely K.R."/>
            <person name="Herron J.N."/>
            <person name="Harker M."/>
            <person name="Edmundson A.B."/>
        </authorList>
    </citation>
    <scope>X-RAY CRYSTALLOGRAPHY (2.00 ANGSTROMS) OF 21-118</scope>
</reference>
<organism>
    <name type="scientific">Homo sapiens</name>
    <name type="common">Human</name>
    <dbReference type="NCBI Taxonomy" id="9606"/>
    <lineage>
        <taxon>Eukaryota</taxon>
        <taxon>Metazoa</taxon>
        <taxon>Chordata</taxon>
        <taxon>Craniata</taxon>
        <taxon>Vertebrata</taxon>
        <taxon>Euteleostomi</taxon>
        <taxon>Mammalia</taxon>
        <taxon>Eutheria</taxon>
        <taxon>Euarchontoglires</taxon>
        <taxon>Primates</taxon>
        <taxon>Haplorrhini</taxon>
        <taxon>Catarrhini</taxon>
        <taxon>Hominidae</taxon>
        <taxon>Homo</taxon>
    </lineage>
</organism>
<feature type="signal peptide" evidence="4 5">
    <location>
        <begin position="1"/>
        <end position="19"/>
    </location>
</feature>
<feature type="chain" id="PRO_0000059835" description="Immunoglobulin lambda variable 2-8" evidence="4 5">
    <location>
        <begin position="20"/>
        <end position="118"/>
    </location>
</feature>
<feature type="domain" description="Ig-like" evidence="2">
    <location>
        <begin position="20"/>
        <end position="118" status="greater than"/>
    </location>
</feature>
<feature type="region of interest" description="Framework-1" evidence="1">
    <location>
        <begin position="20"/>
        <end position="44"/>
    </location>
</feature>
<feature type="region of interest" description="Complementarity-determining-1" evidence="1">
    <location>
        <begin position="45"/>
        <end position="53"/>
    </location>
</feature>
<feature type="region of interest" description="Framework-2" evidence="1">
    <location>
        <begin position="54"/>
        <end position="70"/>
    </location>
</feature>
<feature type="region of interest" description="Complementarity-determining-2" evidence="1">
    <location>
        <begin position="71"/>
        <end position="73"/>
    </location>
</feature>
<feature type="region of interest" description="Framework-3" evidence="1">
    <location>
        <begin position="74"/>
        <end position="109"/>
    </location>
</feature>
<feature type="region of interest" description="Disordered" evidence="3">
    <location>
        <begin position="76"/>
        <end position="97"/>
    </location>
</feature>
<feature type="region of interest" description="Complementarity-determining-3" evidence="1">
    <location>
        <begin position="110"/>
        <end position="118" status="greater than"/>
    </location>
</feature>
<feature type="compositionally biased region" description="Polar residues" evidence="3">
    <location>
        <begin position="85"/>
        <end position="97"/>
    </location>
</feature>
<feature type="modified residue" description="Pyrrolidone carboxylic acid" evidence="4 5">
    <location>
        <position position="20"/>
    </location>
</feature>
<feature type="disulfide bond" evidence="2">
    <location>
        <begin position="41"/>
        <end position="109"/>
    </location>
</feature>
<feature type="sequence conflict" description="In Ref. 3; AA sequence." evidence="12" ref="3">
    <original>P</original>
    <variation>L</variation>
    <location>
        <position position="33"/>
    </location>
</feature>
<feature type="sequence conflict" description="In Ref. 2; AA sequence." evidence="12" ref="2">
    <original>GYN</original>
    <variation>DNK</variation>
    <location>
        <begin position="50"/>
        <end position="52"/>
    </location>
</feature>
<feature type="sequence conflict" description="In Ref. 3; AA sequence." evidence="12" ref="3">
    <original>P</original>
    <variation>A</variation>
    <location>
        <position position="61"/>
    </location>
</feature>
<feature type="sequence conflict" description="In Ref. 2; AA sequence." evidence="12" ref="2">
    <original>K</original>
    <variation>R</variation>
    <location>
        <position position="63"/>
    </location>
</feature>
<feature type="sequence conflict" description="In Ref. 3; AA sequence." evidence="12" ref="3">
    <original>LM</original>
    <variation>VI</variation>
    <location>
        <begin position="67"/>
        <end position="68"/>
    </location>
</feature>
<feature type="sequence conflict" description="In Ref. 2; AA sequence." evidence="12" ref="2">
    <original>MIY</original>
    <variation>VIF</variation>
    <location>
        <begin position="68"/>
        <end position="70"/>
    </location>
</feature>
<feature type="sequence conflict" description="In Ref. 3; AA sequence." evidence="12" ref="3">
    <original>S</original>
    <variation>N</variation>
    <location>
        <position position="73"/>
    </location>
</feature>
<feature type="sequence conflict" description="In Ref. 2; AA sequence." evidence="12" ref="2">
    <original>K</original>
    <variation>Q</variation>
    <location>
        <position position="74"/>
    </location>
</feature>
<feature type="sequence conflict" description="In Ref. 2; AA sequence." evidence="12" ref="2">
    <original>G</original>
    <variation>D</variation>
    <location>
        <position position="89"/>
    </location>
</feature>
<feature type="sequence conflict" description="In Ref. 2; AA sequence." evidence="12" ref="2">
    <original>Q</original>
    <variation>R</variation>
    <location>
        <position position="100"/>
    </location>
</feature>
<feature type="sequence conflict" description="In Ref. 2; AA sequence." evidence="12" ref="2">
    <original>AGS</original>
    <variation>VDN</variation>
    <location>
        <begin position="113"/>
        <end position="115"/>
    </location>
</feature>
<feature type="sequence conflict" description="In Ref. 3; AA sequence." evidence="12" ref="3">
    <original>A</original>
    <variation>E</variation>
    <location>
        <position position="113"/>
    </location>
</feature>
<feature type="sequence conflict" description="In Ref. 3; AA sequence." evidence="12" ref="3">
    <original>N</original>
    <variation>D</variation>
    <location>
        <position position="116"/>
    </location>
</feature>
<feature type="non-terminal residue">
    <location>
        <position position="118"/>
    </location>
</feature>
<feature type="strand" evidence="17">
    <location>
        <begin position="27"/>
        <end position="32"/>
    </location>
</feature>
<feature type="strand" evidence="17">
    <location>
        <begin position="37"/>
        <end position="42"/>
    </location>
</feature>
<feature type="turn" evidence="17">
    <location>
        <begin position="45"/>
        <end position="50"/>
    </location>
</feature>
<feature type="strand" evidence="17">
    <location>
        <begin position="54"/>
        <end position="59"/>
    </location>
</feature>
<feature type="strand" evidence="15">
    <location>
        <begin position="61"/>
        <end position="63"/>
    </location>
</feature>
<feature type="strand" evidence="17">
    <location>
        <begin position="66"/>
        <end position="70"/>
    </location>
</feature>
<feature type="turn" evidence="17">
    <location>
        <begin position="71"/>
        <end position="73"/>
    </location>
</feature>
<feature type="strand" evidence="16">
    <location>
        <begin position="77"/>
        <end position="79"/>
    </location>
</feature>
<feature type="strand" evidence="17">
    <location>
        <begin position="83"/>
        <end position="88"/>
    </location>
</feature>
<feature type="strand" evidence="17">
    <location>
        <begin position="91"/>
        <end position="96"/>
    </location>
</feature>
<feature type="helix" evidence="17">
    <location>
        <begin position="101"/>
        <end position="103"/>
    </location>
</feature>
<feature type="strand" evidence="17">
    <location>
        <begin position="105"/>
        <end position="112"/>
    </location>
</feature>
<feature type="strand" evidence="16">
    <location>
        <begin position="114"/>
        <end position="116"/>
    </location>
</feature>
<dbReference type="EMBL" id="AC245028">
    <property type="status" value="NOT_ANNOTATED_CDS"/>
    <property type="molecule type" value="Genomic_DNA"/>
</dbReference>
<dbReference type="PIR" id="A01976">
    <property type="entry name" value="L2HUBO"/>
</dbReference>
<dbReference type="PIR" id="A90381">
    <property type="entry name" value="L2HUMC"/>
</dbReference>
<dbReference type="PDB" id="1A8J">
    <property type="method" value="X-ray"/>
    <property type="resolution" value="2.70 A"/>
    <property type="chains" value="H/L=21-118"/>
</dbReference>
<dbReference type="PDB" id="1DCL">
    <property type="method" value="X-ray"/>
    <property type="resolution" value="2.30 A"/>
    <property type="chains" value="A/B=21-118"/>
</dbReference>
<dbReference type="PDB" id="1MCW">
    <property type="method" value="X-ray"/>
    <property type="resolution" value="3.50 A"/>
    <property type="chains" value="M=21-118"/>
</dbReference>
<dbReference type="PDB" id="2MCG">
    <property type="method" value="X-ray"/>
    <property type="resolution" value="2.00 A"/>
    <property type="chains" value="1/2=21-118"/>
</dbReference>
<dbReference type="PDB" id="3MCG">
    <property type="method" value="X-ray"/>
    <property type="resolution" value="2.00 A"/>
    <property type="chains" value="1/2=21-118"/>
</dbReference>
<dbReference type="PDB" id="4UNT">
    <property type="method" value="X-ray"/>
    <property type="resolution" value="2.70 A"/>
    <property type="chains" value="A/B/C/D/E/F/G/H=20-118"/>
</dbReference>
<dbReference type="PDB" id="4UNU">
    <property type="method" value="X-ray"/>
    <property type="resolution" value="0.95 A"/>
    <property type="chains" value="A/B=20-118"/>
</dbReference>
<dbReference type="PDB" id="4UNV">
    <property type="method" value="X-ray"/>
    <property type="resolution" value="1.60 A"/>
    <property type="chains" value="A=20-118"/>
</dbReference>
<dbReference type="PDB" id="5ACL">
    <property type="method" value="X-ray"/>
    <property type="resolution" value="1.49 A"/>
    <property type="chains" value="A=20-118"/>
</dbReference>
<dbReference type="PDB" id="5ACM">
    <property type="method" value="X-ray"/>
    <property type="resolution" value="1.05 A"/>
    <property type="chains" value="A/B=20-118"/>
</dbReference>
<dbReference type="PDBsum" id="1A8J"/>
<dbReference type="PDBsum" id="1DCL"/>
<dbReference type="PDBsum" id="1MCW"/>
<dbReference type="PDBsum" id="2MCG"/>
<dbReference type="PDBsum" id="3MCG"/>
<dbReference type="PDBsum" id="4UNT"/>
<dbReference type="PDBsum" id="4UNU"/>
<dbReference type="PDBsum" id="4UNV"/>
<dbReference type="PDBsum" id="5ACL"/>
<dbReference type="PDBsum" id="5ACM"/>
<dbReference type="EMDB" id="EMD-14885"/>
<dbReference type="EMDB" id="EMD-32442"/>
<dbReference type="EMDB" id="EMD-32448"/>
<dbReference type="SMR" id="P01709"/>
<dbReference type="FunCoup" id="P01709">
    <property type="interactions" value="413"/>
</dbReference>
<dbReference type="IntAct" id="P01709">
    <property type="interactions" value="1"/>
</dbReference>
<dbReference type="MINT" id="P01709"/>
<dbReference type="DrugBank" id="DB03088">
    <property type="generic name" value="Pidolic acid"/>
</dbReference>
<dbReference type="IMGT_GENE-DB" id="IGLV2-8"/>
<dbReference type="BioMuta" id="IGLV2-8"/>
<dbReference type="DMDM" id="126560"/>
<dbReference type="jPOST" id="P01709"/>
<dbReference type="MassIVE" id="P01709"/>
<dbReference type="Ensembl" id="ENST00000620395.2">
    <property type="protein sequence ID" value="ENSP00000482937.2"/>
    <property type="gene ID" value="ENSG00000278196.3"/>
</dbReference>
<dbReference type="AGR" id="HGNC:5895"/>
<dbReference type="GeneCards" id="IGLV2-8"/>
<dbReference type="HGNC" id="HGNC:5895">
    <property type="gene designation" value="IGLV2-8"/>
</dbReference>
<dbReference type="HPA" id="ENSG00000278196">
    <property type="expression patterns" value="Tissue enhanced (intestine, lymphoid tissue)"/>
</dbReference>
<dbReference type="neXtProt" id="NX_P01709"/>
<dbReference type="OpenTargets" id="ENSG00000278196"/>
<dbReference type="VEuPathDB" id="HostDB:ENSG00000278196"/>
<dbReference type="GeneTree" id="ENSGT00940000154179"/>
<dbReference type="InParanoid" id="P01709"/>
<dbReference type="OMA" id="RSETKTC"/>
<dbReference type="OrthoDB" id="8908372at2759"/>
<dbReference type="PAN-GO" id="P01709">
    <property type="GO annotations" value="3 GO annotations based on evolutionary models"/>
</dbReference>
<dbReference type="PathwayCommons" id="P01709"/>
<dbReference type="Reactome" id="R-HSA-166663">
    <property type="pathway name" value="Initial triggering of complement"/>
</dbReference>
<dbReference type="Reactome" id="R-HSA-173623">
    <property type="pathway name" value="Classical antibody-mediated complement activation"/>
</dbReference>
<dbReference type="Reactome" id="R-HSA-198933">
    <property type="pathway name" value="Immunoregulatory interactions between a Lymphoid and a non-Lymphoid cell"/>
</dbReference>
<dbReference type="Reactome" id="R-HSA-202733">
    <property type="pathway name" value="Cell surface interactions at the vascular wall"/>
</dbReference>
<dbReference type="Reactome" id="R-HSA-2029481">
    <property type="pathway name" value="FCGR activation"/>
</dbReference>
<dbReference type="Reactome" id="R-HSA-2029482">
    <property type="pathway name" value="Regulation of actin dynamics for phagocytic cup formation"/>
</dbReference>
<dbReference type="Reactome" id="R-HSA-2029485">
    <property type="pathway name" value="Role of phospholipids in phagocytosis"/>
</dbReference>
<dbReference type="Reactome" id="R-HSA-2168880">
    <property type="pathway name" value="Scavenging of heme from plasma"/>
</dbReference>
<dbReference type="Reactome" id="R-HSA-2454202">
    <property type="pathway name" value="Fc epsilon receptor (FCERI) signaling"/>
</dbReference>
<dbReference type="Reactome" id="R-HSA-2730905">
    <property type="pathway name" value="Role of LAT2/NTAL/LAB on calcium mobilization"/>
</dbReference>
<dbReference type="Reactome" id="R-HSA-2871796">
    <property type="pathway name" value="FCERI mediated MAPK activation"/>
</dbReference>
<dbReference type="Reactome" id="R-HSA-2871809">
    <property type="pathway name" value="FCERI mediated Ca+2 mobilization"/>
</dbReference>
<dbReference type="Reactome" id="R-HSA-2871837">
    <property type="pathway name" value="FCERI mediated NF-kB activation"/>
</dbReference>
<dbReference type="Reactome" id="R-HSA-5690714">
    <property type="pathway name" value="CD22 mediated BCR regulation"/>
</dbReference>
<dbReference type="Reactome" id="R-HSA-9664323">
    <property type="pathway name" value="FCGR3A-mediated IL10 synthesis"/>
</dbReference>
<dbReference type="Reactome" id="R-HSA-9664422">
    <property type="pathway name" value="FCGR3A-mediated phagocytosis"/>
</dbReference>
<dbReference type="Reactome" id="R-HSA-9679191">
    <property type="pathway name" value="Potential therapeutics for SARS"/>
</dbReference>
<dbReference type="Reactome" id="R-HSA-977606">
    <property type="pathway name" value="Regulation of Complement cascade"/>
</dbReference>
<dbReference type="Reactome" id="R-HSA-983695">
    <property type="pathway name" value="Antigen activates B Cell Receptor (BCR) leading to generation of second messengers"/>
</dbReference>
<dbReference type="SignaLink" id="P01709"/>
<dbReference type="ChiTaRS" id="IGLV2-8">
    <property type="organism name" value="human"/>
</dbReference>
<dbReference type="EvolutionaryTrace" id="P01709"/>
<dbReference type="Pharos" id="P01709">
    <property type="development level" value="Tdark"/>
</dbReference>
<dbReference type="PRO" id="PR:P01709"/>
<dbReference type="Proteomes" id="UP000005640">
    <property type="component" value="Chromosome 22"/>
</dbReference>
<dbReference type="RNAct" id="P01709">
    <property type="molecule type" value="protein"/>
</dbReference>
<dbReference type="Bgee" id="ENSG00000278196">
    <property type="expression patterns" value="Expressed in duodenum and 91 other cell types or tissues"/>
</dbReference>
<dbReference type="GO" id="GO:0005576">
    <property type="term" value="C:extracellular region"/>
    <property type="evidence" value="ECO:0000304"/>
    <property type="project" value="Reactome"/>
</dbReference>
<dbReference type="GO" id="GO:0019814">
    <property type="term" value="C:immunoglobulin complex"/>
    <property type="evidence" value="ECO:0000318"/>
    <property type="project" value="GO_Central"/>
</dbReference>
<dbReference type="GO" id="GO:0005886">
    <property type="term" value="C:plasma membrane"/>
    <property type="evidence" value="ECO:0000304"/>
    <property type="project" value="Reactome"/>
</dbReference>
<dbReference type="GO" id="GO:0003823">
    <property type="term" value="F:antigen binding"/>
    <property type="evidence" value="ECO:0000303"/>
    <property type="project" value="UniProtKB"/>
</dbReference>
<dbReference type="GO" id="GO:0002250">
    <property type="term" value="P:adaptive immune response"/>
    <property type="evidence" value="ECO:0007669"/>
    <property type="project" value="UniProtKB-KW"/>
</dbReference>
<dbReference type="GO" id="GO:0006955">
    <property type="term" value="P:immune response"/>
    <property type="evidence" value="ECO:0000318"/>
    <property type="project" value="GO_Central"/>
</dbReference>
<dbReference type="FunFam" id="2.60.40.10:FF:000442">
    <property type="entry name" value="Immunoglobulin lambda variable 2-8"/>
    <property type="match status" value="1"/>
</dbReference>
<dbReference type="Gene3D" id="2.60.40.10">
    <property type="entry name" value="Immunoglobulins"/>
    <property type="match status" value="1"/>
</dbReference>
<dbReference type="InterPro" id="IPR007110">
    <property type="entry name" value="Ig-like_dom"/>
</dbReference>
<dbReference type="InterPro" id="IPR036179">
    <property type="entry name" value="Ig-like_dom_sf"/>
</dbReference>
<dbReference type="InterPro" id="IPR013783">
    <property type="entry name" value="Ig-like_fold"/>
</dbReference>
<dbReference type="InterPro" id="IPR003599">
    <property type="entry name" value="Ig_sub"/>
</dbReference>
<dbReference type="InterPro" id="IPR013106">
    <property type="entry name" value="Ig_V-set"/>
</dbReference>
<dbReference type="InterPro" id="IPR050150">
    <property type="entry name" value="IgV_Light_Chain"/>
</dbReference>
<dbReference type="PANTHER" id="PTHR23267">
    <property type="entry name" value="IMMUNOGLOBULIN LIGHT CHAIN"/>
    <property type="match status" value="1"/>
</dbReference>
<dbReference type="Pfam" id="PF07686">
    <property type="entry name" value="V-set"/>
    <property type="match status" value="1"/>
</dbReference>
<dbReference type="SMART" id="SM00409">
    <property type="entry name" value="IG"/>
    <property type="match status" value="1"/>
</dbReference>
<dbReference type="SMART" id="SM00406">
    <property type="entry name" value="IGv"/>
    <property type="match status" value="1"/>
</dbReference>
<dbReference type="SUPFAM" id="SSF48726">
    <property type="entry name" value="Immunoglobulin"/>
    <property type="match status" value="1"/>
</dbReference>
<dbReference type="PROSITE" id="PS50835">
    <property type="entry name" value="IG_LIKE"/>
    <property type="match status" value="1"/>
</dbReference>
<protein>
    <recommendedName>
        <fullName evidence="6 11">Immunoglobulin lambda variable 2-8</fullName>
    </recommendedName>
    <alternativeName>
        <fullName evidence="14">Ig lambda chain V-II region BO</fullName>
    </alternativeName>
    <alternativeName>
        <fullName evidence="13">Ig lambda chain V-II region MGC</fullName>
    </alternativeName>
</protein>
<name>LV208_HUMAN</name>
<gene>
    <name evidence="6 11" type="primary">IGLV2-8</name>
</gene>